<name>CC28B_MOUSE</name>
<gene>
    <name type="primary">Ccdc28b</name>
</gene>
<proteinExistence type="evidence at protein level"/>
<organism>
    <name type="scientific">Mus musculus</name>
    <name type="common">Mouse</name>
    <dbReference type="NCBI Taxonomy" id="10090"/>
    <lineage>
        <taxon>Eukaryota</taxon>
        <taxon>Metazoa</taxon>
        <taxon>Chordata</taxon>
        <taxon>Craniata</taxon>
        <taxon>Vertebrata</taxon>
        <taxon>Euteleostomi</taxon>
        <taxon>Mammalia</taxon>
        <taxon>Eutheria</taxon>
        <taxon>Euarchontoglires</taxon>
        <taxon>Glires</taxon>
        <taxon>Rodentia</taxon>
        <taxon>Myomorpha</taxon>
        <taxon>Muroidea</taxon>
        <taxon>Muridae</taxon>
        <taxon>Murinae</taxon>
        <taxon>Mus</taxon>
        <taxon>Mus</taxon>
    </lineage>
</organism>
<feature type="chain" id="PRO_0000234095" description="Coiled-coil domain-containing protein 28B">
    <location>
        <begin position="1"/>
        <end position="200"/>
    </location>
</feature>
<feature type="region of interest" description="Disordered" evidence="4">
    <location>
        <begin position="1"/>
        <end position="49"/>
    </location>
</feature>
<feature type="region of interest" description="Disordered" evidence="4">
    <location>
        <begin position="140"/>
        <end position="165"/>
    </location>
</feature>
<feature type="coiled-coil region" evidence="3">
    <location>
        <begin position="158"/>
        <end position="189"/>
    </location>
</feature>
<feature type="compositionally biased region" description="Basic residues" evidence="4">
    <location>
        <begin position="1"/>
        <end position="10"/>
    </location>
</feature>
<feature type="compositionally biased region" description="Acidic residues" evidence="4">
    <location>
        <begin position="140"/>
        <end position="152"/>
    </location>
</feature>
<feature type="modified residue" description="N-acetylmethionine" evidence="2">
    <location>
        <position position="1"/>
    </location>
</feature>
<feature type="modified residue" description="Phosphoserine" evidence="8">
    <location>
        <position position="46"/>
    </location>
</feature>
<feature type="modified residue" description="Phosphoserine" evidence="2">
    <location>
        <position position="115"/>
    </location>
</feature>
<feature type="sequence conflict" description="In Ref. 1; BAE34319 and 3; AAH28873." evidence="7" ref="1 3">
    <original>P</original>
    <variation>Q</variation>
    <location>
        <position position="17"/>
    </location>
</feature>
<sequence>MEDKKKKRSPKPCLTQPAQAPGTLRRVPVPTSHSGSLALGLPHLPSPKQRAKFKRAGKEKCRPVLAGGGGGSAGTPLQHSFLTEVTDVYEMEGGLLNLLNDFHSGRLQAFGKECSFEQLEHVREMQEKLARLHFSLDVCGEEEDEEEEEDGVTEGLPEEQKKTMADRNLDQLLSNLEDLSNSIQKLHLAENAEPEDQPAA</sequence>
<comment type="function">
    <text evidence="6">Involved in ciliogenesis. Regulates cilia length through its interaction with MAPKAP1/SIN1 but independently of mTORC2 complex. Modulates mTORC2 complex assembly and function, possibly enhances AKT1 phosphorylation. Does not seem to modulate assembly and function of mTORC1 complex.</text>
</comment>
<comment type="subunit">
    <text evidence="1">Interacts with BBS1, BBS2, BBS4, BBS5, BBS6, BBS7 and TTC8/BBS8. Interacts with MAPKAP1/SIN1 isoform 1 and RICTOR (By similarity).</text>
</comment>
<comment type="subcellular location">
    <subcellularLocation>
        <location evidence="1">Cytoplasm</location>
        <location evidence="1">Cytoskeleton</location>
        <location evidence="1">Microtubule organizing center</location>
        <location evidence="1">Centrosome</location>
    </subcellularLocation>
    <text evidence="1">It localizes near centrosomes and basal bodies.</text>
</comment>
<comment type="tissue specificity">
    <text evidence="5">Expressed in the retina, pericardium and limb epithelium.</text>
</comment>
<reference key="1">
    <citation type="journal article" date="2005" name="Science">
        <title>The transcriptional landscape of the mammalian genome.</title>
        <authorList>
            <person name="Carninci P."/>
            <person name="Kasukawa T."/>
            <person name="Katayama S."/>
            <person name="Gough J."/>
            <person name="Frith M.C."/>
            <person name="Maeda N."/>
            <person name="Oyama R."/>
            <person name="Ravasi T."/>
            <person name="Lenhard B."/>
            <person name="Wells C."/>
            <person name="Kodzius R."/>
            <person name="Shimokawa K."/>
            <person name="Bajic V.B."/>
            <person name="Brenner S.E."/>
            <person name="Batalov S."/>
            <person name="Forrest A.R."/>
            <person name="Zavolan M."/>
            <person name="Davis M.J."/>
            <person name="Wilming L.G."/>
            <person name="Aidinis V."/>
            <person name="Allen J.E."/>
            <person name="Ambesi-Impiombato A."/>
            <person name="Apweiler R."/>
            <person name="Aturaliya R.N."/>
            <person name="Bailey T.L."/>
            <person name="Bansal M."/>
            <person name="Baxter L."/>
            <person name="Beisel K.W."/>
            <person name="Bersano T."/>
            <person name="Bono H."/>
            <person name="Chalk A.M."/>
            <person name="Chiu K.P."/>
            <person name="Choudhary V."/>
            <person name="Christoffels A."/>
            <person name="Clutterbuck D.R."/>
            <person name="Crowe M.L."/>
            <person name="Dalla E."/>
            <person name="Dalrymple B.P."/>
            <person name="de Bono B."/>
            <person name="Della Gatta G."/>
            <person name="di Bernardo D."/>
            <person name="Down T."/>
            <person name="Engstrom P."/>
            <person name="Fagiolini M."/>
            <person name="Faulkner G."/>
            <person name="Fletcher C.F."/>
            <person name="Fukushima T."/>
            <person name="Furuno M."/>
            <person name="Futaki S."/>
            <person name="Gariboldi M."/>
            <person name="Georgii-Hemming P."/>
            <person name="Gingeras T.R."/>
            <person name="Gojobori T."/>
            <person name="Green R.E."/>
            <person name="Gustincich S."/>
            <person name="Harbers M."/>
            <person name="Hayashi Y."/>
            <person name="Hensch T.K."/>
            <person name="Hirokawa N."/>
            <person name="Hill D."/>
            <person name="Huminiecki L."/>
            <person name="Iacono M."/>
            <person name="Ikeo K."/>
            <person name="Iwama A."/>
            <person name="Ishikawa T."/>
            <person name="Jakt M."/>
            <person name="Kanapin A."/>
            <person name="Katoh M."/>
            <person name="Kawasawa Y."/>
            <person name="Kelso J."/>
            <person name="Kitamura H."/>
            <person name="Kitano H."/>
            <person name="Kollias G."/>
            <person name="Krishnan S.P."/>
            <person name="Kruger A."/>
            <person name="Kummerfeld S.K."/>
            <person name="Kurochkin I.V."/>
            <person name="Lareau L.F."/>
            <person name="Lazarevic D."/>
            <person name="Lipovich L."/>
            <person name="Liu J."/>
            <person name="Liuni S."/>
            <person name="McWilliam S."/>
            <person name="Madan Babu M."/>
            <person name="Madera M."/>
            <person name="Marchionni L."/>
            <person name="Matsuda H."/>
            <person name="Matsuzawa S."/>
            <person name="Miki H."/>
            <person name="Mignone F."/>
            <person name="Miyake S."/>
            <person name="Morris K."/>
            <person name="Mottagui-Tabar S."/>
            <person name="Mulder N."/>
            <person name="Nakano N."/>
            <person name="Nakauchi H."/>
            <person name="Ng P."/>
            <person name="Nilsson R."/>
            <person name="Nishiguchi S."/>
            <person name="Nishikawa S."/>
            <person name="Nori F."/>
            <person name="Ohara O."/>
            <person name="Okazaki Y."/>
            <person name="Orlando V."/>
            <person name="Pang K.C."/>
            <person name="Pavan W.J."/>
            <person name="Pavesi G."/>
            <person name="Pesole G."/>
            <person name="Petrovsky N."/>
            <person name="Piazza S."/>
            <person name="Reed J."/>
            <person name="Reid J.F."/>
            <person name="Ring B.Z."/>
            <person name="Ringwald M."/>
            <person name="Rost B."/>
            <person name="Ruan Y."/>
            <person name="Salzberg S.L."/>
            <person name="Sandelin A."/>
            <person name="Schneider C."/>
            <person name="Schoenbach C."/>
            <person name="Sekiguchi K."/>
            <person name="Semple C.A."/>
            <person name="Seno S."/>
            <person name="Sessa L."/>
            <person name="Sheng Y."/>
            <person name="Shibata Y."/>
            <person name="Shimada H."/>
            <person name="Shimada K."/>
            <person name="Silva D."/>
            <person name="Sinclair B."/>
            <person name="Sperling S."/>
            <person name="Stupka E."/>
            <person name="Sugiura K."/>
            <person name="Sultana R."/>
            <person name="Takenaka Y."/>
            <person name="Taki K."/>
            <person name="Tammoja K."/>
            <person name="Tan S.L."/>
            <person name="Tang S."/>
            <person name="Taylor M.S."/>
            <person name="Tegner J."/>
            <person name="Teichmann S.A."/>
            <person name="Ueda H.R."/>
            <person name="van Nimwegen E."/>
            <person name="Verardo R."/>
            <person name="Wei C.L."/>
            <person name="Yagi K."/>
            <person name="Yamanishi H."/>
            <person name="Zabarovsky E."/>
            <person name="Zhu S."/>
            <person name="Zimmer A."/>
            <person name="Hide W."/>
            <person name="Bult C."/>
            <person name="Grimmond S.M."/>
            <person name="Teasdale R.D."/>
            <person name="Liu E.T."/>
            <person name="Brusic V."/>
            <person name="Quackenbush J."/>
            <person name="Wahlestedt C."/>
            <person name="Mattick J.S."/>
            <person name="Hume D.A."/>
            <person name="Kai C."/>
            <person name="Sasaki D."/>
            <person name="Tomaru Y."/>
            <person name="Fukuda S."/>
            <person name="Kanamori-Katayama M."/>
            <person name="Suzuki M."/>
            <person name="Aoki J."/>
            <person name="Arakawa T."/>
            <person name="Iida J."/>
            <person name="Imamura K."/>
            <person name="Itoh M."/>
            <person name="Kato T."/>
            <person name="Kawaji H."/>
            <person name="Kawagashira N."/>
            <person name="Kawashima T."/>
            <person name="Kojima M."/>
            <person name="Kondo S."/>
            <person name="Konno H."/>
            <person name="Nakano K."/>
            <person name="Ninomiya N."/>
            <person name="Nishio T."/>
            <person name="Okada M."/>
            <person name="Plessy C."/>
            <person name="Shibata K."/>
            <person name="Shiraki T."/>
            <person name="Suzuki S."/>
            <person name="Tagami M."/>
            <person name="Waki K."/>
            <person name="Watahiki A."/>
            <person name="Okamura-Oho Y."/>
            <person name="Suzuki H."/>
            <person name="Kawai J."/>
            <person name="Hayashizaki Y."/>
        </authorList>
    </citation>
    <scope>NUCLEOTIDE SEQUENCE [LARGE SCALE MRNA]</scope>
    <source>
        <strain>C57BL/6J</strain>
        <tissue>Head</tissue>
    </source>
</reference>
<reference key="2">
    <citation type="journal article" date="2009" name="PLoS Biol.">
        <title>Lineage-specific biology revealed by a finished genome assembly of the mouse.</title>
        <authorList>
            <person name="Church D.M."/>
            <person name="Goodstadt L."/>
            <person name="Hillier L.W."/>
            <person name="Zody M.C."/>
            <person name="Goldstein S."/>
            <person name="She X."/>
            <person name="Bult C.J."/>
            <person name="Agarwala R."/>
            <person name="Cherry J.L."/>
            <person name="DiCuccio M."/>
            <person name="Hlavina W."/>
            <person name="Kapustin Y."/>
            <person name="Meric P."/>
            <person name="Maglott D."/>
            <person name="Birtle Z."/>
            <person name="Marques A.C."/>
            <person name="Graves T."/>
            <person name="Zhou S."/>
            <person name="Teague B."/>
            <person name="Potamousis K."/>
            <person name="Churas C."/>
            <person name="Place M."/>
            <person name="Herschleb J."/>
            <person name="Runnheim R."/>
            <person name="Forrest D."/>
            <person name="Amos-Landgraf J."/>
            <person name="Schwartz D.C."/>
            <person name="Cheng Z."/>
            <person name="Lindblad-Toh K."/>
            <person name="Eichler E.E."/>
            <person name="Ponting C.P."/>
        </authorList>
    </citation>
    <scope>NUCLEOTIDE SEQUENCE [LARGE SCALE GENOMIC DNA]</scope>
    <source>
        <strain>C57BL/6J</strain>
    </source>
</reference>
<reference key="3">
    <citation type="journal article" date="2004" name="Genome Res.">
        <title>The status, quality, and expansion of the NIH full-length cDNA project: the Mammalian Gene Collection (MGC).</title>
        <authorList>
            <consortium name="The MGC Project Team"/>
        </authorList>
    </citation>
    <scope>NUCLEOTIDE SEQUENCE [LARGE SCALE MRNA]</scope>
    <source>
        <strain>FVB/N</strain>
        <tissue>Colon</tissue>
    </source>
</reference>
<reference key="4">
    <citation type="journal article" date="2006" name="Nature">
        <title>Dissection of epistasis in oligogenic Bardet-Biedl syndrome.</title>
        <authorList>
            <person name="Badano J.L."/>
            <person name="Leitch C.C."/>
            <person name="Ansley S.J."/>
            <person name="May-Simera H."/>
            <person name="Lawson S."/>
            <person name="Lewis R.A."/>
            <person name="Beales P.L."/>
            <person name="Dietz H.C."/>
            <person name="Fisher S."/>
            <person name="Katsanis N."/>
        </authorList>
    </citation>
    <scope>TISSUE SPECIFICITY</scope>
</reference>
<reference key="5">
    <citation type="journal article" date="2010" name="Cell">
        <title>A tissue-specific atlas of mouse protein phosphorylation and expression.</title>
        <authorList>
            <person name="Huttlin E.L."/>
            <person name="Jedrychowski M.P."/>
            <person name="Elias J.E."/>
            <person name="Goswami T."/>
            <person name="Rad R."/>
            <person name="Beausoleil S.A."/>
            <person name="Villen J."/>
            <person name="Haas W."/>
            <person name="Sowa M.E."/>
            <person name="Gygi S.P."/>
        </authorList>
    </citation>
    <scope>PHOSPHORYLATION [LARGE SCALE ANALYSIS] AT SER-46</scope>
    <scope>IDENTIFICATION BY MASS SPECTROMETRY [LARGE SCALE ANALYSIS]</scope>
    <source>
        <tissue>Brain</tissue>
        <tissue>Kidney</tissue>
    </source>
</reference>
<reference key="6">
    <citation type="journal article" date="2013" name="Hum. Mol. Genet.">
        <title>The Bardet-Biedl syndrome-related protein CCDC28B modulates mTORC2 function and interacts with SIN1 to control cilia length independently of the mTOR complex.</title>
        <authorList>
            <person name="Cardenas-Rodriguez M."/>
            <person name="Irigoin F."/>
            <person name="Osborn D.P."/>
            <person name="Gascue C."/>
            <person name="Katsanis N."/>
            <person name="Beales P.L."/>
            <person name="Badano J.L."/>
        </authorList>
    </citation>
    <scope>FUNCTION IN AKT1 PHOSPHORYLATION</scope>
</reference>
<accession>Q8CEG5</accession>
<accession>A2ADZ9</accession>
<accession>Q8K132</accession>
<evidence type="ECO:0000250" key="1"/>
<evidence type="ECO:0000250" key="2">
    <source>
        <dbReference type="UniProtKB" id="Q9BUN5"/>
    </source>
</evidence>
<evidence type="ECO:0000255" key="3"/>
<evidence type="ECO:0000256" key="4">
    <source>
        <dbReference type="SAM" id="MobiDB-lite"/>
    </source>
</evidence>
<evidence type="ECO:0000269" key="5">
    <source>
    </source>
</evidence>
<evidence type="ECO:0000269" key="6">
    <source>
    </source>
</evidence>
<evidence type="ECO:0000305" key="7"/>
<evidence type="ECO:0007744" key="8">
    <source>
    </source>
</evidence>
<protein>
    <recommendedName>
        <fullName>Coiled-coil domain-containing protein 28B</fullName>
    </recommendedName>
</protein>
<dbReference type="EMBL" id="AK028262">
    <property type="protein sequence ID" value="BAC25848.1"/>
    <property type="molecule type" value="mRNA"/>
</dbReference>
<dbReference type="EMBL" id="AK158016">
    <property type="protein sequence ID" value="BAE34319.1"/>
    <property type="molecule type" value="mRNA"/>
</dbReference>
<dbReference type="EMBL" id="AL671759">
    <property type="status" value="NOT_ANNOTATED_CDS"/>
    <property type="molecule type" value="Genomic_DNA"/>
</dbReference>
<dbReference type="EMBL" id="BC028873">
    <property type="protein sequence ID" value="AAH28873.1"/>
    <property type="molecule type" value="mRNA"/>
</dbReference>
<dbReference type="CCDS" id="CCDS18700.1"/>
<dbReference type="RefSeq" id="NP_079731.2">
    <property type="nucleotide sequence ID" value="NM_025455.2"/>
</dbReference>
<dbReference type="RefSeq" id="XP_036020200.1">
    <property type="nucleotide sequence ID" value="XM_036164307.1"/>
</dbReference>
<dbReference type="SMR" id="Q8CEG5"/>
<dbReference type="FunCoup" id="Q8CEG5">
    <property type="interactions" value="101"/>
</dbReference>
<dbReference type="STRING" id="10090.ENSMUSP00000030586"/>
<dbReference type="iPTMnet" id="Q8CEG5"/>
<dbReference type="PhosphoSitePlus" id="Q8CEG5"/>
<dbReference type="PaxDb" id="10090-ENSMUSP00000030586"/>
<dbReference type="PeptideAtlas" id="Q8CEG5"/>
<dbReference type="ProteomicsDB" id="265701"/>
<dbReference type="Antibodypedia" id="31247">
    <property type="antibodies" value="83 antibodies from 19 providers"/>
</dbReference>
<dbReference type="DNASU" id="66264"/>
<dbReference type="Ensembl" id="ENSMUST00000030586.15">
    <property type="protein sequence ID" value="ENSMUSP00000030586.9"/>
    <property type="gene ID" value="ENSMUSG00000028795.16"/>
</dbReference>
<dbReference type="GeneID" id="66264"/>
<dbReference type="KEGG" id="mmu:66264"/>
<dbReference type="UCSC" id="uc008uxt.1">
    <property type="organism name" value="mouse"/>
</dbReference>
<dbReference type="AGR" id="MGI:1913514"/>
<dbReference type="CTD" id="79140"/>
<dbReference type="MGI" id="MGI:1913514">
    <property type="gene designation" value="Ccdc28b"/>
</dbReference>
<dbReference type="VEuPathDB" id="HostDB:ENSMUSG00000028795"/>
<dbReference type="eggNOG" id="ENOG502RYUK">
    <property type="taxonomic scope" value="Eukaryota"/>
</dbReference>
<dbReference type="GeneTree" id="ENSGT00500000044870"/>
<dbReference type="HOGENOM" id="CLU_089059_1_0_1"/>
<dbReference type="InParanoid" id="Q8CEG5"/>
<dbReference type="OMA" id="GKYKRAH"/>
<dbReference type="TreeFam" id="TF323549"/>
<dbReference type="BioGRID-ORCS" id="66264">
    <property type="hits" value="6 hits in 78 CRISPR screens"/>
</dbReference>
<dbReference type="ChiTaRS" id="Ccdc28b">
    <property type="organism name" value="mouse"/>
</dbReference>
<dbReference type="PRO" id="PR:Q8CEG5"/>
<dbReference type="Proteomes" id="UP000000589">
    <property type="component" value="Chromosome 4"/>
</dbReference>
<dbReference type="RNAct" id="Q8CEG5">
    <property type="molecule type" value="protein"/>
</dbReference>
<dbReference type="Bgee" id="ENSMUSG00000028795">
    <property type="expression patterns" value="Expressed in retinal neural layer and 232 other cell types or tissues"/>
</dbReference>
<dbReference type="ExpressionAtlas" id="Q8CEG5">
    <property type="expression patterns" value="baseline and differential"/>
</dbReference>
<dbReference type="GO" id="GO:0005813">
    <property type="term" value="C:centrosome"/>
    <property type="evidence" value="ECO:0007669"/>
    <property type="project" value="UniProtKB-SubCell"/>
</dbReference>
<dbReference type="GO" id="GO:0005737">
    <property type="term" value="C:cytoplasm"/>
    <property type="evidence" value="ECO:0007669"/>
    <property type="project" value="UniProtKB-KW"/>
</dbReference>
<dbReference type="GO" id="GO:0060271">
    <property type="term" value="P:cilium assembly"/>
    <property type="evidence" value="ECO:0007669"/>
    <property type="project" value="Ensembl"/>
</dbReference>
<dbReference type="InterPro" id="IPR025271">
    <property type="entry name" value="CCDC28"/>
</dbReference>
<dbReference type="PANTHER" id="PTHR13400">
    <property type="entry name" value="CHEMOKINE C-C MOTIF RECEPTOR 1"/>
    <property type="match status" value="1"/>
</dbReference>
<dbReference type="PANTHER" id="PTHR13400:SF2">
    <property type="entry name" value="COILED-COIL DOMAIN-CONTAINING PROTEIN 28B"/>
    <property type="match status" value="1"/>
</dbReference>
<dbReference type="Pfam" id="PF13270">
    <property type="entry name" value="CCDC28"/>
    <property type="match status" value="1"/>
</dbReference>
<keyword id="KW-0007">Acetylation</keyword>
<keyword id="KW-0970">Cilium biogenesis/degradation</keyword>
<keyword id="KW-0175">Coiled coil</keyword>
<keyword id="KW-0963">Cytoplasm</keyword>
<keyword id="KW-0206">Cytoskeleton</keyword>
<keyword id="KW-0597">Phosphoprotein</keyword>
<keyword id="KW-1185">Reference proteome</keyword>